<feature type="chain" id="PRO_1000017519" description="Large ribosomal subunit protein bL27">
    <location>
        <begin position="1"/>
        <end position="88"/>
    </location>
</feature>
<feature type="strand" evidence="3">
    <location>
        <begin position="22"/>
        <end position="25"/>
    </location>
</feature>
<feature type="strand" evidence="3">
    <location>
        <begin position="36"/>
        <end position="39"/>
    </location>
</feature>
<feature type="strand" evidence="4">
    <location>
        <begin position="44"/>
        <end position="47"/>
    </location>
</feature>
<feature type="strand" evidence="4">
    <location>
        <begin position="51"/>
        <end position="53"/>
    </location>
</feature>
<feature type="strand" evidence="5">
    <location>
        <begin position="55"/>
        <end position="57"/>
    </location>
</feature>
<feature type="strand" evidence="4">
    <location>
        <begin position="59"/>
        <end position="63"/>
    </location>
</feature>
<feature type="strand" evidence="4">
    <location>
        <begin position="65"/>
        <end position="67"/>
    </location>
</feature>
<feature type="strand" evidence="4">
    <location>
        <begin position="70"/>
        <end position="72"/>
    </location>
</feature>
<feature type="strand" evidence="4">
    <location>
        <begin position="75"/>
        <end position="78"/>
    </location>
</feature>
<organism>
    <name type="scientific">Mycolicibacterium smegmatis (strain ATCC 700084 / mc(2)155)</name>
    <name type="common">Mycobacterium smegmatis</name>
    <dbReference type="NCBI Taxonomy" id="246196"/>
    <lineage>
        <taxon>Bacteria</taxon>
        <taxon>Bacillati</taxon>
        <taxon>Actinomycetota</taxon>
        <taxon>Actinomycetes</taxon>
        <taxon>Mycobacteriales</taxon>
        <taxon>Mycobacteriaceae</taxon>
        <taxon>Mycolicibacterium</taxon>
    </lineage>
</organism>
<dbReference type="EMBL" id="CP000480">
    <property type="protein sequence ID" value="ABK73657.1"/>
    <property type="molecule type" value="Genomic_DNA"/>
</dbReference>
<dbReference type="EMBL" id="CP001663">
    <property type="protein sequence ID" value="AFP40961.1"/>
    <property type="molecule type" value="Genomic_DNA"/>
</dbReference>
<dbReference type="RefSeq" id="WP_003896001.1">
    <property type="nucleotide sequence ID" value="NZ_SIJM01000004.1"/>
</dbReference>
<dbReference type="RefSeq" id="YP_888888.1">
    <property type="nucleotide sequence ID" value="NC_008596.1"/>
</dbReference>
<dbReference type="PDB" id="5O60">
    <property type="method" value="EM"/>
    <property type="resolution" value="3.20 A"/>
    <property type="chains" value="X=1-88"/>
</dbReference>
<dbReference type="PDB" id="5O61">
    <property type="method" value="EM"/>
    <property type="resolution" value="3.31 A"/>
    <property type="chains" value="X=1-88"/>
</dbReference>
<dbReference type="PDB" id="5XYM">
    <property type="method" value="EM"/>
    <property type="resolution" value="3.08 A"/>
    <property type="chains" value="W=1-88"/>
</dbReference>
<dbReference type="PDB" id="5ZEB">
    <property type="method" value="EM"/>
    <property type="resolution" value="3.40 A"/>
    <property type="chains" value="X=1-88"/>
</dbReference>
<dbReference type="PDB" id="5ZEP">
    <property type="method" value="EM"/>
    <property type="resolution" value="3.40 A"/>
    <property type="chains" value="X=1-88"/>
</dbReference>
<dbReference type="PDB" id="5ZET">
    <property type="method" value="EM"/>
    <property type="resolution" value="3.20 A"/>
    <property type="chains" value="X=1-88"/>
</dbReference>
<dbReference type="PDB" id="6DZI">
    <property type="method" value="EM"/>
    <property type="resolution" value="3.46 A"/>
    <property type="chains" value="X=8-86"/>
</dbReference>
<dbReference type="PDB" id="6DZP">
    <property type="method" value="EM"/>
    <property type="resolution" value="3.42 A"/>
    <property type="chains" value="X=1-88"/>
</dbReference>
<dbReference type="PDB" id="7S0S">
    <property type="method" value="EM"/>
    <property type="resolution" value="3.05 A"/>
    <property type="chains" value="Y=8-86"/>
</dbReference>
<dbReference type="PDB" id="7XAM">
    <property type="method" value="EM"/>
    <property type="resolution" value="2.80 A"/>
    <property type="chains" value="X=1-88"/>
</dbReference>
<dbReference type="PDB" id="7Y41">
    <property type="method" value="EM"/>
    <property type="resolution" value="4.10 A"/>
    <property type="chains" value="X=1-88"/>
</dbReference>
<dbReference type="PDB" id="8FR8">
    <property type="method" value="EM"/>
    <property type="resolution" value="2.76 A"/>
    <property type="chains" value="4=8-86"/>
</dbReference>
<dbReference type="PDB" id="8KAB">
    <property type="method" value="EM"/>
    <property type="resolution" value="3.30 A"/>
    <property type="chains" value="X=1-88"/>
</dbReference>
<dbReference type="PDB" id="8V9J">
    <property type="method" value="EM"/>
    <property type="resolution" value="3.10 A"/>
    <property type="chains" value="Y=1-88"/>
</dbReference>
<dbReference type="PDB" id="8V9K">
    <property type="method" value="EM"/>
    <property type="resolution" value="3.10 A"/>
    <property type="chains" value="Y=1-88"/>
</dbReference>
<dbReference type="PDB" id="8V9L">
    <property type="method" value="EM"/>
    <property type="resolution" value="3.00 A"/>
    <property type="chains" value="Y=1-88"/>
</dbReference>
<dbReference type="PDB" id="8VIO">
    <property type="method" value="EM"/>
    <property type="resolution" value="3.26 A"/>
    <property type="chains" value="X=1-88"/>
</dbReference>
<dbReference type="PDB" id="8VK0">
    <property type="method" value="EM"/>
    <property type="resolution" value="3.14 A"/>
    <property type="chains" value="X=1-88"/>
</dbReference>
<dbReference type="PDB" id="8VK7">
    <property type="method" value="EM"/>
    <property type="resolution" value="3.09 A"/>
    <property type="chains" value="X=1-88"/>
</dbReference>
<dbReference type="PDB" id="8VKI">
    <property type="method" value="EM"/>
    <property type="resolution" value="2.96 A"/>
    <property type="chains" value="X=1-88"/>
</dbReference>
<dbReference type="PDB" id="8VKW">
    <property type="method" value="EM"/>
    <property type="resolution" value="3.44 A"/>
    <property type="chains" value="X=1-88"/>
</dbReference>
<dbReference type="PDB" id="8VR4">
    <property type="method" value="EM"/>
    <property type="resolution" value="2.80 A"/>
    <property type="chains" value="X=1-88"/>
</dbReference>
<dbReference type="PDB" id="8VR8">
    <property type="method" value="EM"/>
    <property type="resolution" value="3.25 A"/>
    <property type="chains" value="X=1-88"/>
</dbReference>
<dbReference type="PDB" id="8VRL">
    <property type="method" value="EM"/>
    <property type="resolution" value="3.33 A"/>
    <property type="chains" value="X=1-88"/>
</dbReference>
<dbReference type="PDB" id="8WHX">
    <property type="method" value="EM"/>
    <property type="resolution" value="2.80 A"/>
    <property type="chains" value="Z=1-88"/>
</dbReference>
<dbReference type="PDB" id="8WHY">
    <property type="method" value="EM"/>
    <property type="resolution" value="2.70 A"/>
    <property type="chains" value="Z=1-88"/>
</dbReference>
<dbReference type="PDB" id="8WI7">
    <property type="method" value="EM"/>
    <property type="resolution" value="3.50 A"/>
    <property type="chains" value="Z=1-88"/>
</dbReference>
<dbReference type="PDB" id="8WI8">
    <property type="method" value="EM"/>
    <property type="resolution" value="2.70 A"/>
    <property type="chains" value="Z=1-88"/>
</dbReference>
<dbReference type="PDB" id="8WIB">
    <property type="method" value="EM"/>
    <property type="resolution" value="3.50 A"/>
    <property type="chains" value="Z=1-88"/>
</dbReference>
<dbReference type="PDB" id="8WIC">
    <property type="method" value="EM"/>
    <property type="resolution" value="3.50 A"/>
    <property type="chains" value="Z=1-88"/>
</dbReference>
<dbReference type="PDB" id="8XZ3">
    <property type="method" value="EM"/>
    <property type="resolution" value="3.60 A"/>
    <property type="chains" value="X=8-86"/>
</dbReference>
<dbReference type="PDBsum" id="5O60"/>
<dbReference type="PDBsum" id="5O61"/>
<dbReference type="PDBsum" id="5XYM"/>
<dbReference type="PDBsum" id="5ZEB"/>
<dbReference type="PDBsum" id="5ZEP"/>
<dbReference type="PDBsum" id="5ZET"/>
<dbReference type="PDBsum" id="6DZI"/>
<dbReference type="PDBsum" id="6DZP"/>
<dbReference type="PDBsum" id="7S0S"/>
<dbReference type="PDBsum" id="7XAM"/>
<dbReference type="PDBsum" id="7Y41"/>
<dbReference type="PDBsum" id="8FR8"/>
<dbReference type="PDBsum" id="8KAB"/>
<dbReference type="PDBsum" id="8V9J"/>
<dbReference type="PDBsum" id="8V9K"/>
<dbReference type="PDBsum" id="8V9L"/>
<dbReference type="PDBsum" id="8VIO"/>
<dbReference type="PDBsum" id="8VK0"/>
<dbReference type="PDBsum" id="8VK7"/>
<dbReference type="PDBsum" id="8VKI"/>
<dbReference type="PDBsum" id="8VKW"/>
<dbReference type="PDBsum" id="8VR4"/>
<dbReference type="PDBsum" id="8VR8"/>
<dbReference type="PDBsum" id="8VRL"/>
<dbReference type="PDBsum" id="8WHX"/>
<dbReference type="PDBsum" id="8WHY"/>
<dbReference type="PDBsum" id="8WI7"/>
<dbReference type="PDBsum" id="8WI8"/>
<dbReference type="PDBsum" id="8WIB"/>
<dbReference type="PDBsum" id="8WIC"/>
<dbReference type="PDBsum" id="8XZ3"/>
<dbReference type="EMDB" id="EMD-29397"/>
<dbReference type="EMDB" id="EMD-33096"/>
<dbReference type="EMDB" id="EMD-33599"/>
<dbReference type="EMDB" id="EMD-37007"/>
<dbReference type="EMDB" id="EMD-3750"/>
<dbReference type="EMDB" id="EMD-3751"/>
<dbReference type="EMDB" id="EMD-37551"/>
<dbReference type="EMDB" id="EMD-37552"/>
<dbReference type="EMDB" id="EMD-37559"/>
<dbReference type="EMDB" id="EMD-37560"/>
<dbReference type="EMDB" id="EMD-37562"/>
<dbReference type="EMDB" id="EMD-37563"/>
<dbReference type="EMDB" id="EMD-38788"/>
<dbReference type="EMDB" id="EMD-43074"/>
<dbReference type="EMDB" id="EMD-43075"/>
<dbReference type="EMDB" id="EMD-43076"/>
<dbReference type="EMDB" id="EMD-43267"/>
<dbReference type="EMDB" id="EMD-43294"/>
<dbReference type="EMDB" id="EMD-43305"/>
<dbReference type="EMDB" id="EMD-43317"/>
<dbReference type="EMDB" id="EMD-43333"/>
<dbReference type="EMDB" id="EMD-43476"/>
<dbReference type="EMDB" id="EMD-43477"/>
<dbReference type="EMDB" id="EMD-43484"/>
<dbReference type="EMDB" id="EMD-6789"/>
<dbReference type="EMDB" id="EMD-6920"/>
<dbReference type="EMDB" id="EMD-6921"/>
<dbReference type="EMDB" id="EMD-6922"/>
<dbReference type="EMDB" id="EMD-8932"/>
<dbReference type="EMDB" id="EMD-8937"/>
<dbReference type="SMR" id="A0R150"/>
<dbReference type="IntAct" id="A0R150">
    <property type="interactions" value="2"/>
</dbReference>
<dbReference type="STRING" id="246196.MSMEG_4624"/>
<dbReference type="PaxDb" id="246196-MSMEI_4507"/>
<dbReference type="GeneID" id="93459313"/>
<dbReference type="KEGG" id="msb:LJ00_22870"/>
<dbReference type="KEGG" id="msg:MSMEI_4507"/>
<dbReference type="KEGG" id="msm:MSMEG_4624"/>
<dbReference type="PATRIC" id="fig|246196.19.peg.4519"/>
<dbReference type="eggNOG" id="COG0211">
    <property type="taxonomic scope" value="Bacteria"/>
</dbReference>
<dbReference type="OrthoDB" id="9803474at2"/>
<dbReference type="Proteomes" id="UP000000757">
    <property type="component" value="Chromosome"/>
</dbReference>
<dbReference type="Proteomes" id="UP000006158">
    <property type="component" value="Chromosome"/>
</dbReference>
<dbReference type="GO" id="GO:0022625">
    <property type="term" value="C:cytosolic large ribosomal subunit"/>
    <property type="evidence" value="ECO:0007669"/>
    <property type="project" value="TreeGrafter"/>
</dbReference>
<dbReference type="GO" id="GO:0003735">
    <property type="term" value="F:structural constituent of ribosome"/>
    <property type="evidence" value="ECO:0007669"/>
    <property type="project" value="InterPro"/>
</dbReference>
<dbReference type="GO" id="GO:0006412">
    <property type="term" value="P:translation"/>
    <property type="evidence" value="ECO:0007669"/>
    <property type="project" value="UniProtKB-UniRule"/>
</dbReference>
<dbReference type="FunFam" id="2.40.50.100:FF:000020">
    <property type="entry name" value="50S ribosomal protein L27"/>
    <property type="match status" value="1"/>
</dbReference>
<dbReference type="Gene3D" id="2.40.50.100">
    <property type="match status" value="1"/>
</dbReference>
<dbReference type="HAMAP" id="MF_00539">
    <property type="entry name" value="Ribosomal_bL27"/>
    <property type="match status" value="1"/>
</dbReference>
<dbReference type="InterPro" id="IPR001684">
    <property type="entry name" value="Ribosomal_bL27"/>
</dbReference>
<dbReference type="InterPro" id="IPR018261">
    <property type="entry name" value="Ribosomal_bL27_CS"/>
</dbReference>
<dbReference type="NCBIfam" id="TIGR00062">
    <property type="entry name" value="L27"/>
    <property type="match status" value="1"/>
</dbReference>
<dbReference type="PANTHER" id="PTHR15893:SF0">
    <property type="entry name" value="LARGE RIBOSOMAL SUBUNIT PROTEIN BL27M"/>
    <property type="match status" value="1"/>
</dbReference>
<dbReference type="PANTHER" id="PTHR15893">
    <property type="entry name" value="RIBOSOMAL PROTEIN L27"/>
    <property type="match status" value="1"/>
</dbReference>
<dbReference type="Pfam" id="PF01016">
    <property type="entry name" value="Ribosomal_L27"/>
    <property type="match status" value="1"/>
</dbReference>
<dbReference type="PRINTS" id="PR00063">
    <property type="entry name" value="RIBOSOMALL27"/>
</dbReference>
<dbReference type="SUPFAM" id="SSF110324">
    <property type="entry name" value="Ribosomal L27 protein-like"/>
    <property type="match status" value="1"/>
</dbReference>
<dbReference type="PROSITE" id="PS00831">
    <property type="entry name" value="RIBOSOMAL_L27"/>
    <property type="match status" value="1"/>
</dbReference>
<reference key="1">
    <citation type="submission" date="2006-10" db="EMBL/GenBank/DDBJ databases">
        <authorList>
            <person name="Fleischmann R.D."/>
            <person name="Dodson R.J."/>
            <person name="Haft D.H."/>
            <person name="Merkel J.S."/>
            <person name="Nelson W.C."/>
            <person name="Fraser C.M."/>
        </authorList>
    </citation>
    <scope>NUCLEOTIDE SEQUENCE [LARGE SCALE GENOMIC DNA]</scope>
    <source>
        <strain>ATCC 700084 / mc(2)155</strain>
    </source>
</reference>
<reference key="2">
    <citation type="journal article" date="2007" name="Genome Biol.">
        <title>Interrupted coding sequences in Mycobacterium smegmatis: authentic mutations or sequencing errors?</title>
        <authorList>
            <person name="Deshayes C."/>
            <person name="Perrodou E."/>
            <person name="Gallien S."/>
            <person name="Euphrasie D."/>
            <person name="Schaeffer C."/>
            <person name="Van-Dorsselaer A."/>
            <person name="Poch O."/>
            <person name="Lecompte O."/>
            <person name="Reyrat J.-M."/>
        </authorList>
    </citation>
    <scope>NUCLEOTIDE SEQUENCE [LARGE SCALE GENOMIC DNA]</scope>
    <source>
        <strain>ATCC 700084 / mc(2)155</strain>
    </source>
</reference>
<reference key="3">
    <citation type="journal article" date="2009" name="Genome Res.">
        <title>Ortho-proteogenomics: multiple proteomes investigation through orthology and a new MS-based protocol.</title>
        <authorList>
            <person name="Gallien S."/>
            <person name="Perrodou E."/>
            <person name="Carapito C."/>
            <person name="Deshayes C."/>
            <person name="Reyrat J.-M."/>
            <person name="Van Dorsselaer A."/>
            <person name="Poch O."/>
            <person name="Schaeffer C."/>
            <person name="Lecompte O."/>
        </authorList>
    </citation>
    <scope>NUCLEOTIDE SEQUENCE [LARGE SCALE GENOMIC DNA]</scope>
    <scope>IDENTIFICATION BY MASS SPECTROMETRY [LARGE SCALE ANALYSIS]</scope>
    <source>
        <strain>ATCC 700084 / mc(2)155</strain>
    </source>
</reference>
<proteinExistence type="evidence at protein level"/>
<protein>
    <recommendedName>
        <fullName evidence="1">Large ribosomal subunit protein bL27</fullName>
    </recommendedName>
    <alternativeName>
        <fullName evidence="2">50S ribosomal protein L27</fullName>
    </alternativeName>
</protein>
<accession>A0R150</accession>
<accession>I7GCK9</accession>
<gene>
    <name evidence="1" type="primary">rpmA</name>
    <name type="ordered locus">MSMEG_4624</name>
    <name type="ordered locus">MSMEI_4507</name>
</gene>
<evidence type="ECO:0000255" key="1">
    <source>
        <dbReference type="HAMAP-Rule" id="MF_00539"/>
    </source>
</evidence>
<evidence type="ECO:0000305" key="2"/>
<evidence type="ECO:0007829" key="3">
    <source>
        <dbReference type="PDB" id="5O60"/>
    </source>
</evidence>
<evidence type="ECO:0007829" key="4">
    <source>
        <dbReference type="PDB" id="5XYM"/>
    </source>
</evidence>
<evidence type="ECO:0007829" key="5">
    <source>
        <dbReference type="PDB" id="5ZET"/>
    </source>
</evidence>
<sequence>MAHKKGASSSRNGRDSAAQRLGVKRFGGQVVKAGEILVRQRGTHFHPGVNVGRGGDDTLFALAPGAVEFGAKRGRKTVNIVPVARPEA</sequence>
<keyword id="KW-0002">3D-structure</keyword>
<keyword id="KW-1185">Reference proteome</keyword>
<keyword id="KW-0687">Ribonucleoprotein</keyword>
<keyword id="KW-0689">Ribosomal protein</keyword>
<comment type="similarity">
    <text evidence="1">Belongs to the bacterial ribosomal protein bL27 family.</text>
</comment>
<name>RL27_MYCS2</name>